<protein>
    <recommendedName>
        <fullName evidence="1">2-C-methyl-D-erythritol 2,4-cyclodiphosphate synthase</fullName>
        <shortName evidence="1">MECDP-synthase</shortName>
        <shortName evidence="1">MECPP-synthase</shortName>
        <shortName evidence="1">MECPS</shortName>
        <ecNumber evidence="1">4.6.1.12</ecNumber>
    </recommendedName>
</protein>
<dbReference type="EC" id="4.6.1.12" evidence="1"/>
<dbReference type="EMBL" id="CP000563">
    <property type="protein sequence ID" value="ABN62605.1"/>
    <property type="molecule type" value="Genomic_DNA"/>
</dbReference>
<dbReference type="RefSeq" id="WP_011847437.1">
    <property type="nucleotide sequence ID" value="NC_009052.1"/>
</dbReference>
<dbReference type="SMR" id="A3D792"/>
<dbReference type="STRING" id="325240.Sbal_3124"/>
<dbReference type="GeneID" id="11773329"/>
<dbReference type="KEGG" id="sbl:Sbal_3124"/>
<dbReference type="HOGENOM" id="CLU_084630_2_0_6"/>
<dbReference type="OrthoDB" id="9804336at2"/>
<dbReference type="UniPathway" id="UPA00056">
    <property type="reaction ID" value="UER00095"/>
</dbReference>
<dbReference type="Proteomes" id="UP000001557">
    <property type="component" value="Chromosome"/>
</dbReference>
<dbReference type="GO" id="GO:0008685">
    <property type="term" value="F:2-C-methyl-D-erythritol 2,4-cyclodiphosphate synthase activity"/>
    <property type="evidence" value="ECO:0007669"/>
    <property type="project" value="UniProtKB-UniRule"/>
</dbReference>
<dbReference type="GO" id="GO:0046872">
    <property type="term" value="F:metal ion binding"/>
    <property type="evidence" value="ECO:0007669"/>
    <property type="project" value="UniProtKB-KW"/>
</dbReference>
<dbReference type="GO" id="GO:0019288">
    <property type="term" value="P:isopentenyl diphosphate biosynthetic process, methylerythritol 4-phosphate pathway"/>
    <property type="evidence" value="ECO:0007669"/>
    <property type="project" value="UniProtKB-UniRule"/>
</dbReference>
<dbReference type="GO" id="GO:0016114">
    <property type="term" value="P:terpenoid biosynthetic process"/>
    <property type="evidence" value="ECO:0007669"/>
    <property type="project" value="InterPro"/>
</dbReference>
<dbReference type="CDD" id="cd00554">
    <property type="entry name" value="MECDP_synthase"/>
    <property type="match status" value="1"/>
</dbReference>
<dbReference type="FunFam" id="3.30.1330.50:FF:000001">
    <property type="entry name" value="2-C-methyl-D-erythritol 2,4-cyclodiphosphate synthase"/>
    <property type="match status" value="1"/>
</dbReference>
<dbReference type="Gene3D" id="3.30.1330.50">
    <property type="entry name" value="2-C-methyl-D-erythritol 2,4-cyclodiphosphate synthase"/>
    <property type="match status" value="1"/>
</dbReference>
<dbReference type="HAMAP" id="MF_00107">
    <property type="entry name" value="IspF"/>
    <property type="match status" value="1"/>
</dbReference>
<dbReference type="InterPro" id="IPR003526">
    <property type="entry name" value="MECDP_synthase"/>
</dbReference>
<dbReference type="InterPro" id="IPR020555">
    <property type="entry name" value="MECDP_synthase_CS"/>
</dbReference>
<dbReference type="InterPro" id="IPR036571">
    <property type="entry name" value="MECDP_synthase_sf"/>
</dbReference>
<dbReference type="NCBIfam" id="TIGR00151">
    <property type="entry name" value="ispF"/>
    <property type="match status" value="1"/>
</dbReference>
<dbReference type="PANTHER" id="PTHR43181">
    <property type="entry name" value="2-C-METHYL-D-ERYTHRITOL 2,4-CYCLODIPHOSPHATE SYNTHASE, CHLOROPLASTIC"/>
    <property type="match status" value="1"/>
</dbReference>
<dbReference type="PANTHER" id="PTHR43181:SF1">
    <property type="entry name" value="2-C-METHYL-D-ERYTHRITOL 2,4-CYCLODIPHOSPHATE SYNTHASE, CHLOROPLASTIC"/>
    <property type="match status" value="1"/>
</dbReference>
<dbReference type="Pfam" id="PF02542">
    <property type="entry name" value="YgbB"/>
    <property type="match status" value="1"/>
</dbReference>
<dbReference type="SUPFAM" id="SSF69765">
    <property type="entry name" value="IpsF-like"/>
    <property type="match status" value="1"/>
</dbReference>
<dbReference type="PROSITE" id="PS01350">
    <property type="entry name" value="ISPF"/>
    <property type="match status" value="1"/>
</dbReference>
<feature type="chain" id="PRO_1000022876" description="2-C-methyl-D-erythritol 2,4-cyclodiphosphate synthase">
    <location>
        <begin position="1"/>
        <end position="161"/>
    </location>
</feature>
<feature type="binding site" evidence="1">
    <location>
        <begin position="10"/>
        <end position="12"/>
    </location>
    <ligand>
        <name>4-CDP-2-C-methyl-D-erythritol 2-phosphate</name>
        <dbReference type="ChEBI" id="CHEBI:57919"/>
    </ligand>
</feature>
<feature type="binding site" evidence="1">
    <location>
        <position position="10"/>
    </location>
    <ligand>
        <name>a divalent metal cation</name>
        <dbReference type="ChEBI" id="CHEBI:60240"/>
    </ligand>
</feature>
<feature type="binding site" evidence="1">
    <location>
        <position position="12"/>
    </location>
    <ligand>
        <name>a divalent metal cation</name>
        <dbReference type="ChEBI" id="CHEBI:60240"/>
    </ligand>
</feature>
<feature type="binding site" evidence="1">
    <location>
        <begin position="36"/>
        <end position="37"/>
    </location>
    <ligand>
        <name>4-CDP-2-C-methyl-D-erythritol 2-phosphate</name>
        <dbReference type="ChEBI" id="CHEBI:57919"/>
    </ligand>
</feature>
<feature type="binding site" evidence="1">
    <location>
        <position position="44"/>
    </location>
    <ligand>
        <name>a divalent metal cation</name>
        <dbReference type="ChEBI" id="CHEBI:60240"/>
    </ligand>
</feature>
<feature type="binding site" evidence="1">
    <location>
        <begin position="58"/>
        <end position="60"/>
    </location>
    <ligand>
        <name>4-CDP-2-C-methyl-D-erythritol 2-phosphate</name>
        <dbReference type="ChEBI" id="CHEBI:57919"/>
    </ligand>
</feature>
<feature type="binding site" evidence="1">
    <location>
        <begin position="63"/>
        <end position="67"/>
    </location>
    <ligand>
        <name>4-CDP-2-C-methyl-D-erythritol 2-phosphate</name>
        <dbReference type="ChEBI" id="CHEBI:57919"/>
    </ligand>
</feature>
<feature type="binding site" evidence="1">
    <location>
        <begin position="102"/>
        <end position="108"/>
    </location>
    <ligand>
        <name>4-CDP-2-C-methyl-D-erythritol 2-phosphate</name>
        <dbReference type="ChEBI" id="CHEBI:57919"/>
    </ligand>
</feature>
<feature type="binding site" evidence="1">
    <location>
        <begin position="134"/>
        <end position="137"/>
    </location>
    <ligand>
        <name>4-CDP-2-C-methyl-D-erythritol 2-phosphate</name>
        <dbReference type="ChEBI" id="CHEBI:57919"/>
    </ligand>
</feature>
<feature type="binding site" evidence="1">
    <location>
        <position position="141"/>
    </location>
    <ligand>
        <name>4-CDP-2-C-methyl-D-erythritol 2-phosphate</name>
        <dbReference type="ChEBI" id="CHEBI:57919"/>
    </ligand>
</feature>
<feature type="binding site" evidence="1">
    <location>
        <position position="144"/>
    </location>
    <ligand>
        <name>4-CDP-2-C-methyl-D-erythritol 2-phosphate</name>
        <dbReference type="ChEBI" id="CHEBI:57919"/>
    </ligand>
</feature>
<feature type="site" description="Transition state stabilizer" evidence="1">
    <location>
        <position position="36"/>
    </location>
</feature>
<feature type="site" description="Transition state stabilizer" evidence="1">
    <location>
        <position position="135"/>
    </location>
</feature>
<keyword id="KW-0414">Isoprene biosynthesis</keyword>
<keyword id="KW-0456">Lyase</keyword>
<keyword id="KW-0479">Metal-binding</keyword>
<keyword id="KW-1185">Reference proteome</keyword>
<name>ISPF_SHEB5</name>
<evidence type="ECO:0000255" key="1">
    <source>
        <dbReference type="HAMAP-Rule" id="MF_00107"/>
    </source>
</evidence>
<organism>
    <name type="scientific">Shewanella baltica (strain OS155 / ATCC BAA-1091)</name>
    <dbReference type="NCBI Taxonomy" id="325240"/>
    <lineage>
        <taxon>Bacteria</taxon>
        <taxon>Pseudomonadati</taxon>
        <taxon>Pseudomonadota</taxon>
        <taxon>Gammaproteobacteria</taxon>
        <taxon>Alteromonadales</taxon>
        <taxon>Shewanellaceae</taxon>
        <taxon>Shewanella</taxon>
    </lineage>
</organism>
<proteinExistence type="inferred from homology"/>
<gene>
    <name evidence="1" type="primary">ispF</name>
    <name type="ordered locus">Sbal_3124</name>
</gene>
<sequence>MKIRIGHGFDVHKFGAARPLILCGVEVPYETGLIAHSDGDVVLHAISDAILGALALGDIGKHFPDTDTAYKGADSRVLLRHCYALARAKGFVLGNLDVTIIAQAPKMAPHIEAMRQILAADLTSELDDINVKATTTEQLGFTGRKEGIAVEAVVLMTRKHD</sequence>
<reference key="1">
    <citation type="submission" date="2007-02" db="EMBL/GenBank/DDBJ databases">
        <title>Complete sequence of chromosome of Shewanella baltica OS155.</title>
        <authorList>
            <consortium name="US DOE Joint Genome Institute"/>
            <person name="Copeland A."/>
            <person name="Lucas S."/>
            <person name="Lapidus A."/>
            <person name="Barry K."/>
            <person name="Detter J.C."/>
            <person name="Glavina del Rio T."/>
            <person name="Hammon N."/>
            <person name="Israni S."/>
            <person name="Dalin E."/>
            <person name="Tice H."/>
            <person name="Pitluck S."/>
            <person name="Sims D.R."/>
            <person name="Brettin T."/>
            <person name="Bruce D."/>
            <person name="Han C."/>
            <person name="Tapia R."/>
            <person name="Brainard J."/>
            <person name="Schmutz J."/>
            <person name="Larimer F."/>
            <person name="Land M."/>
            <person name="Hauser L."/>
            <person name="Kyrpides N."/>
            <person name="Mikhailova N."/>
            <person name="Brettar I."/>
            <person name="Klappenbach J."/>
            <person name="Konstantinidis K."/>
            <person name="Rodrigues J."/>
            <person name="Tiedje J."/>
            <person name="Richardson P."/>
        </authorList>
    </citation>
    <scope>NUCLEOTIDE SEQUENCE [LARGE SCALE GENOMIC DNA]</scope>
    <source>
        <strain>OS155 / ATCC BAA-1091</strain>
    </source>
</reference>
<comment type="function">
    <text evidence="1">Involved in the biosynthesis of isopentenyl diphosphate (IPP) and dimethylallyl diphosphate (DMAPP), two major building blocks of isoprenoid compounds. Catalyzes the conversion of 4-diphosphocytidyl-2-C-methyl-D-erythritol 2-phosphate (CDP-ME2P) to 2-C-methyl-D-erythritol 2,4-cyclodiphosphate (ME-CPP) with a corresponding release of cytidine 5-monophosphate (CMP).</text>
</comment>
<comment type="catalytic activity">
    <reaction evidence="1">
        <text>4-CDP-2-C-methyl-D-erythritol 2-phosphate = 2-C-methyl-D-erythritol 2,4-cyclic diphosphate + CMP</text>
        <dbReference type="Rhea" id="RHEA:23864"/>
        <dbReference type="ChEBI" id="CHEBI:57919"/>
        <dbReference type="ChEBI" id="CHEBI:58483"/>
        <dbReference type="ChEBI" id="CHEBI:60377"/>
        <dbReference type="EC" id="4.6.1.12"/>
    </reaction>
</comment>
<comment type="cofactor">
    <cofactor evidence="1">
        <name>a divalent metal cation</name>
        <dbReference type="ChEBI" id="CHEBI:60240"/>
    </cofactor>
    <text evidence="1">Binds 1 divalent metal cation per subunit.</text>
</comment>
<comment type="pathway">
    <text evidence="1">Isoprenoid biosynthesis; isopentenyl diphosphate biosynthesis via DXP pathway; isopentenyl diphosphate from 1-deoxy-D-xylulose 5-phosphate: step 4/6.</text>
</comment>
<comment type="subunit">
    <text evidence="1">Homotrimer.</text>
</comment>
<comment type="similarity">
    <text evidence="1">Belongs to the IspF family.</text>
</comment>
<accession>A3D792</accession>